<feature type="chain" id="PRO_0000212376" description="Gamma-aminobutyric acid receptor-associated protein-like 3">
    <location>
        <begin position="1"/>
        <end position="116"/>
    </location>
</feature>
<feature type="propeptide" id="PRO_0000423073" description="Removed in mature form" evidence="1">
    <location>
        <position position="117"/>
    </location>
</feature>
<feature type="region of interest" description="Interaction with beta-tubulin" evidence="1">
    <location>
        <begin position="1"/>
        <end position="22"/>
    </location>
</feature>
<feature type="region of interest" description="Interaction with GABRG2" evidence="1">
    <location>
        <begin position="36"/>
        <end position="68"/>
    </location>
</feature>
<feature type="site" description="Cleavage; by ATG4B" evidence="1">
    <location>
        <begin position="116"/>
        <end position="117"/>
    </location>
</feature>
<feature type="lipid moiety-binding region" description="Phosphatidylethanolamine amidated glycine" evidence="2">
    <location>
        <position position="116"/>
    </location>
</feature>
<evidence type="ECO:0000250" key="1"/>
<evidence type="ECO:0000250" key="2">
    <source>
        <dbReference type="UniProtKB" id="P60520"/>
    </source>
</evidence>
<evidence type="ECO:0000269" key="3">
    <source>
    </source>
</evidence>
<evidence type="ECO:0000305" key="4"/>
<accession>Q9BY60</accession>
<keyword id="KW-0072">Autophagy</keyword>
<keyword id="KW-0963">Cytoplasm</keyword>
<keyword id="KW-0968">Cytoplasmic vesicle</keyword>
<keyword id="KW-0206">Cytoskeleton</keyword>
<keyword id="KW-0449">Lipoprotein</keyword>
<keyword id="KW-0472">Membrane</keyword>
<keyword id="KW-0493">Microtubule</keyword>
<keyword id="KW-1185">Reference proteome</keyword>
<gene>
    <name type="primary">GABARAPL3</name>
</gene>
<sequence length="117" mass="13976">MKFQYKEVHPFEYRKKEGEKIRKKYPDRVPLIVEKAPKARVPDLDRRKYLVPSDLTDGQFYLLIRKRIHLRPEDALFFFVNNTIPPTSATMGQLYEDSHEEDDFLYVAYSNESVYGK</sequence>
<comment type="function">
    <text evidence="1">Ubiquitin-like modifier involved in autophagosome formation. Whereas LC3s are involved in elongation of the phagophore membrane, the GABARAP/GATE-16 subfamily is essential for a later stage in autophagosome maturation (By similarity).</text>
</comment>
<comment type="subunit">
    <text evidence="1">Interacts with GABRG2 and beta-tubulin.</text>
</comment>
<comment type="subcellular location">
    <subcellularLocation>
        <location evidence="4">Cytoplasm</location>
        <location evidence="4">Cytoskeleton</location>
    </subcellularLocation>
    <subcellularLocation>
        <location evidence="4">Cytoplasmic vesicle</location>
        <location evidence="4">Autophagosome membrane</location>
        <topology evidence="4">Lipid-anchor</topology>
    </subcellularLocation>
</comment>
<comment type="tissue specificity">
    <text evidence="3">Ubiquitous. Expressed at very high levels in the brain, heart, peripheral blood leukocytes, liver, kidney, placenta and skeletal muscle. Expressed at very low levels in thymus and small intestine.</text>
</comment>
<comment type="PTM">
    <text evidence="1">The precursor molecule is cleaved by ATG4B to form the cytosolic form, GABARAPL3-I. This is activated by APG7L/ATG7, transferred to ATG3 and conjugated to phospholipid to form the membrane-bound form, GABARAPL3-II. ATG4B also mediates the delipidation required for GABARAPL1 recycling when autophagosomes fuse with lysosomes (By similarity).</text>
</comment>
<comment type="similarity">
    <text evidence="4">Belongs to the ATG8 family.</text>
</comment>
<proteinExistence type="evidence at transcript level"/>
<dbReference type="EMBL" id="AF180519">
    <property type="protein sequence ID" value="AAK16237.1"/>
    <property type="molecule type" value="mRNA"/>
</dbReference>
<dbReference type="SMR" id="Q9BY60"/>
<dbReference type="FunCoup" id="Q9BY60">
    <property type="interactions" value="134"/>
</dbReference>
<dbReference type="GlyGen" id="Q9BY60">
    <property type="glycosylation" value="1 site"/>
</dbReference>
<dbReference type="BioMuta" id="HGNC:4069"/>
<dbReference type="DMDM" id="44887972"/>
<dbReference type="MassIVE" id="Q9BY60"/>
<dbReference type="PeptideAtlas" id="Q9BY60"/>
<dbReference type="AGR" id="HGNC:4069"/>
<dbReference type="GeneCards" id="GABARAPL3"/>
<dbReference type="HGNC" id="HGNC:4069">
    <property type="gene designation" value="GABARAPL3"/>
</dbReference>
<dbReference type="neXtProt" id="NX_Q9BY60"/>
<dbReference type="InParanoid" id="Q9BY60"/>
<dbReference type="PAN-GO" id="Q9BY60">
    <property type="GO annotations" value="9 GO annotations based on evolutionary models"/>
</dbReference>
<dbReference type="PhylomeDB" id="Q9BY60"/>
<dbReference type="TreeFam" id="TF314556"/>
<dbReference type="PathwayCommons" id="Q9BY60"/>
<dbReference type="Reactome" id="R-HSA-1632852">
    <property type="pathway name" value="Macroautophagy"/>
</dbReference>
<dbReference type="Pharos" id="Q9BY60">
    <property type="development level" value="Tdark"/>
</dbReference>
<dbReference type="PRO" id="PR:Q9BY60"/>
<dbReference type="Proteomes" id="UP000005640">
    <property type="component" value="Unplaced"/>
</dbReference>
<dbReference type="RNAct" id="Q9BY60">
    <property type="molecule type" value="protein"/>
</dbReference>
<dbReference type="GO" id="GO:0000421">
    <property type="term" value="C:autophagosome membrane"/>
    <property type="evidence" value="ECO:0000318"/>
    <property type="project" value="GO_Central"/>
</dbReference>
<dbReference type="GO" id="GO:0031410">
    <property type="term" value="C:cytoplasmic vesicle"/>
    <property type="evidence" value="ECO:0007669"/>
    <property type="project" value="UniProtKB-KW"/>
</dbReference>
<dbReference type="GO" id="GO:0005874">
    <property type="term" value="C:microtubule"/>
    <property type="evidence" value="ECO:0007669"/>
    <property type="project" value="UniProtKB-KW"/>
</dbReference>
<dbReference type="GO" id="GO:0050811">
    <property type="term" value="F:GABA receptor binding"/>
    <property type="evidence" value="ECO:0000318"/>
    <property type="project" value="GO_Central"/>
</dbReference>
<dbReference type="GO" id="GO:0008429">
    <property type="term" value="F:phosphatidylethanolamine binding"/>
    <property type="evidence" value="ECO:0000318"/>
    <property type="project" value="GO_Central"/>
</dbReference>
<dbReference type="GO" id="GO:0031625">
    <property type="term" value="F:ubiquitin protein ligase binding"/>
    <property type="evidence" value="ECO:0000318"/>
    <property type="project" value="GO_Central"/>
</dbReference>
<dbReference type="GO" id="GO:0000045">
    <property type="term" value="P:autophagosome assembly"/>
    <property type="evidence" value="ECO:0000318"/>
    <property type="project" value="GO_Central"/>
</dbReference>
<dbReference type="GO" id="GO:0097352">
    <property type="term" value="P:autophagosome maturation"/>
    <property type="evidence" value="ECO:0000318"/>
    <property type="project" value="GO_Central"/>
</dbReference>
<dbReference type="GO" id="GO:0006995">
    <property type="term" value="P:cellular response to nitrogen starvation"/>
    <property type="evidence" value="ECO:0000318"/>
    <property type="project" value="GO_Central"/>
</dbReference>
<dbReference type="GO" id="GO:0000423">
    <property type="term" value="P:mitophagy"/>
    <property type="evidence" value="ECO:0000318"/>
    <property type="project" value="GO_Central"/>
</dbReference>
<dbReference type="FunFam" id="3.10.20.90:FF:000037">
    <property type="entry name" value="Gamma-aminobutyric acid receptor-associated protein-like 1"/>
    <property type="match status" value="1"/>
</dbReference>
<dbReference type="Gene3D" id="3.10.20.90">
    <property type="entry name" value="Phosphatidylinositol 3-kinase Catalytic Subunit, Chain A, domain 1"/>
    <property type="match status" value="1"/>
</dbReference>
<dbReference type="InterPro" id="IPR004241">
    <property type="entry name" value="Atg8-like"/>
</dbReference>
<dbReference type="InterPro" id="IPR029071">
    <property type="entry name" value="Ubiquitin-like_domsf"/>
</dbReference>
<dbReference type="PANTHER" id="PTHR10969">
    <property type="entry name" value="MICROTUBULE-ASSOCIATED PROTEINS 1A/1B LIGHT CHAIN 3-RELATED"/>
    <property type="match status" value="1"/>
</dbReference>
<dbReference type="Pfam" id="PF02991">
    <property type="entry name" value="ATG8"/>
    <property type="match status" value="1"/>
</dbReference>
<dbReference type="SUPFAM" id="SSF54236">
    <property type="entry name" value="Ubiquitin-like"/>
    <property type="match status" value="1"/>
</dbReference>
<reference key="1">
    <citation type="journal article" date="2001" name="Genomics">
        <title>Cloning, expression patterns, and chromosome localization of three human and two mouse homologues of GABA(A) receptor-associated protein.</title>
        <authorList>
            <person name="Xin Y."/>
            <person name="Yu L."/>
            <person name="Chen Z."/>
            <person name="Zheng L."/>
            <person name="Fu Q."/>
            <person name="Jiang J."/>
            <person name="Zhang P."/>
            <person name="Gong R."/>
            <person name="Zhao S."/>
        </authorList>
    </citation>
    <scope>NUCLEOTIDE SEQUENCE [MRNA]</scope>
    <scope>TISSUE SPECIFICITY</scope>
</reference>
<organism>
    <name type="scientific">Homo sapiens</name>
    <name type="common">Human</name>
    <dbReference type="NCBI Taxonomy" id="9606"/>
    <lineage>
        <taxon>Eukaryota</taxon>
        <taxon>Metazoa</taxon>
        <taxon>Chordata</taxon>
        <taxon>Craniata</taxon>
        <taxon>Vertebrata</taxon>
        <taxon>Euteleostomi</taxon>
        <taxon>Mammalia</taxon>
        <taxon>Eutheria</taxon>
        <taxon>Euarchontoglires</taxon>
        <taxon>Primates</taxon>
        <taxon>Haplorrhini</taxon>
        <taxon>Catarrhini</taxon>
        <taxon>Hominidae</taxon>
        <taxon>Homo</taxon>
    </lineage>
</organism>
<protein>
    <recommendedName>
        <fullName>Gamma-aminobutyric acid receptor-associated protein-like 3</fullName>
    </recommendedName>
    <alternativeName>
        <fullName>GABA(A) receptor-associated protein-like 3</fullName>
    </alternativeName>
</protein>
<name>GBRL3_HUMAN</name>